<proteinExistence type="inferred from homology"/>
<name>RS6_LAWIP</name>
<reference key="1">
    <citation type="submission" date="2005-11" db="EMBL/GenBank/DDBJ databases">
        <title>The complete genome sequence of Lawsonia intracellularis: the causative agent of proliferative enteropathy.</title>
        <authorList>
            <person name="Kaur K."/>
            <person name="Zhang Q."/>
            <person name="Beckler D."/>
            <person name="Munir S."/>
            <person name="Li L."/>
            <person name="Kinsley K."/>
            <person name="Herron L."/>
            <person name="Peterson A."/>
            <person name="May B."/>
            <person name="Singh S."/>
            <person name="Gebhart C."/>
            <person name="Kapur V."/>
        </authorList>
    </citation>
    <scope>NUCLEOTIDE SEQUENCE [LARGE SCALE GENOMIC DNA]</scope>
    <source>
        <strain>PHE/MN1-00</strain>
    </source>
</reference>
<evidence type="ECO:0000255" key="1">
    <source>
        <dbReference type="HAMAP-Rule" id="MF_00360"/>
    </source>
</evidence>
<evidence type="ECO:0000305" key="2"/>
<sequence>MRKFETLLLLSPELSPDAREALLVKLVSIIEKNKGQFTVNHWGMRDLAYPVQKHMRGYYVLLEYTTYPNIIEELERIIRITNGIFKFMTIKLEEHIEEKQLEEVV</sequence>
<feature type="chain" id="PRO_1000005286" description="Small ribosomal subunit protein bS6">
    <location>
        <begin position="1"/>
        <end position="105"/>
    </location>
</feature>
<protein>
    <recommendedName>
        <fullName evidence="1">Small ribosomal subunit protein bS6</fullName>
    </recommendedName>
    <alternativeName>
        <fullName evidence="2">30S ribosomal protein S6</fullName>
    </alternativeName>
</protein>
<gene>
    <name evidence="1" type="primary">rpsF</name>
    <name type="ordered locus">LI0352</name>
</gene>
<dbReference type="EMBL" id="AM180252">
    <property type="protein sequence ID" value="CAJ54408.1"/>
    <property type="molecule type" value="Genomic_DNA"/>
</dbReference>
<dbReference type="RefSeq" id="WP_011526437.1">
    <property type="nucleotide sequence ID" value="NC_008011.1"/>
</dbReference>
<dbReference type="SMR" id="Q1MRG8"/>
<dbReference type="STRING" id="363253.LI0352"/>
<dbReference type="KEGG" id="lip:LI0352"/>
<dbReference type="eggNOG" id="COG0360">
    <property type="taxonomic scope" value="Bacteria"/>
</dbReference>
<dbReference type="HOGENOM" id="CLU_113441_5_1_7"/>
<dbReference type="OrthoDB" id="9812702at2"/>
<dbReference type="Proteomes" id="UP000002430">
    <property type="component" value="Chromosome"/>
</dbReference>
<dbReference type="GO" id="GO:0005737">
    <property type="term" value="C:cytoplasm"/>
    <property type="evidence" value="ECO:0007669"/>
    <property type="project" value="UniProtKB-ARBA"/>
</dbReference>
<dbReference type="GO" id="GO:1990904">
    <property type="term" value="C:ribonucleoprotein complex"/>
    <property type="evidence" value="ECO:0007669"/>
    <property type="project" value="UniProtKB-KW"/>
</dbReference>
<dbReference type="GO" id="GO:0005840">
    <property type="term" value="C:ribosome"/>
    <property type="evidence" value="ECO:0007669"/>
    <property type="project" value="UniProtKB-KW"/>
</dbReference>
<dbReference type="GO" id="GO:0070181">
    <property type="term" value="F:small ribosomal subunit rRNA binding"/>
    <property type="evidence" value="ECO:0007669"/>
    <property type="project" value="TreeGrafter"/>
</dbReference>
<dbReference type="GO" id="GO:0003735">
    <property type="term" value="F:structural constituent of ribosome"/>
    <property type="evidence" value="ECO:0007669"/>
    <property type="project" value="InterPro"/>
</dbReference>
<dbReference type="GO" id="GO:0006412">
    <property type="term" value="P:translation"/>
    <property type="evidence" value="ECO:0007669"/>
    <property type="project" value="UniProtKB-UniRule"/>
</dbReference>
<dbReference type="CDD" id="cd00473">
    <property type="entry name" value="bS6"/>
    <property type="match status" value="1"/>
</dbReference>
<dbReference type="Gene3D" id="3.30.70.60">
    <property type="match status" value="1"/>
</dbReference>
<dbReference type="HAMAP" id="MF_00360">
    <property type="entry name" value="Ribosomal_bS6"/>
    <property type="match status" value="1"/>
</dbReference>
<dbReference type="InterPro" id="IPR000529">
    <property type="entry name" value="Ribosomal_bS6"/>
</dbReference>
<dbReference type="InterPro" id="IPR035980">
    <property type="entry name" value="Ribosomal_bS6_sf"/>
</dbReference>
<dbReference type="InterPro" id="IPR020814">
    <property type="entry name" value="Ribosomal_S6_plastid/chlpt"/>
</dbReference>
<dbReference type="InterPro" id="IPR014717">
    <property type="entry name" value="Transl_elong_EF1B/ribsomal_bS6"/>
</dbReference>
<dbReference type="NCBIfam" id="TIGR00166">
    <property type="entry name" value="S6"/>
    <property type="match status" value="1"/>
</dbReference>
<dbReference type="PANTHER" id="PTHR21011">
    <property type="entry name" value="MITOCHONDRIAL 28S RIBOSOMAL PROTEIN S6"/>
    <property type="match status" value="1"/>
</dbReference>
<dbReference type="PANTHER" id="PTHR21011:SF1">
    <property type="entry name" value="SMALL RIBOSOMAL SUBUNIT PROTEIN BS6M"/>
    <property type="match status" value="1"/>
</dbReference>
<dbReference type="Pfam" id="PF01250">
    <property type="entry name" value="Ribosomal_S6"/>
    <property type="match status" value="1"/>
</dbReference>
<dbReference type="SUPFAM" id="SSF54995">
    <property type="entry name" value="Ribosomal protein S6"/>
    <property type="match status" value="1"/>
</dbReference>
<keyword id="KW-1185">Reference proteome</keyword>
<keyword id="KW-0687">Ribonucleoprotein</keyword>
<keyword id="KW-0689">Ribosomal protein</keyword>
<keyword id="KW-0694">RNA-binding</keyword>
<keyword id="KW-0699">rRNA-binding</keyword>
<comment type="function">
    <text evidence="1">Binds together with bS18 to 16S ribosomal RNA.</text>
</comment>
<comment type="similarity">
    <text evidence="1">Belongs to the bacterial ribosomal protein bS6 family.</text>
</comment>
<accession>Q1MRG8</accession>
<organism>
    <name type="scientific">Lawsonia intracellularis (strain PHE/MN1-00)</name>
    <dbReference type="NCBI Taxonomy" id="363253"/>
    <lineage>
        <taxon>Bacteria</taxon>
        <taxon>Pseudomonadati</taxon>
        <taxon>Thermodesulfobacteriota</taxon>
        <taxon>Desulfovibrionia</taxon>
        <taxon>Desulfovibrionales</taxon>
        <taxon>Desulfovibrionaceae</taxon>
        <taxon>Lawsonia</taxon>
    </lineage>
</organism>